<feature type="chain" id="PRO_0000429779" description="Meiotic recombination protein SPO11-4">
    <location>
        <begin position="1"/>
        <end position="487"/>
    </location>
</feature>
<feature type="domain" description="Topo IIA-type catalytic" evidence="3">
    <location>
        <begin position="119"/>
        <end position="252"/>
    </location>
</feature>
<feature type="region of interest" description="Disordered" evidence="4">
    <location>
        <begin position="1"/>
        <end position="56"/>
    </location>
</feature>
<feature type="active site" description="O-(5'-phospho-DNA)-tyrosine intermediate" evidence="3">
    <location>
        <position position="213"/>
    </location>
</feature>
<feature type="binding site" evidence="2">
    <location>
        <position position="301"/>
    </location>
    <ligand>
        <name>Mg(2+)</name>
        <dbReference type="ChEBI" id="CHEBI:18420"/>
    </ligand>
</feature>
<feature type="binding site" evidence="2">
    <location>
        <position position="353"/>
    </location>
    <ligand>
        <name>Mg(2+)</name>
        <dbReference type="ChEBI" id="CHEBI:18420"/>
    </ligand>
</feature>
<feature type="sequence conflict" description="In Ref. 1; ACZ58078." evidence="6" ref="1">
    <original>D</original>
    <variation>G</variation>
    <location>
        <position position="7"/>
    </location>
</feature>
<reference key="1">
    <citation type="journal article" date="2011" name="PLoS ONE">
        <title>OsSpo11-4, a rice homologue of the archaeal TopVIA protein, mediates double-strand DNA cleavage and interacts with OsTopVIB.</title>
        <authorList>
            <person name="An X.J."/>
            <person name="Deng Z.Y."/>
            <person name="Wang T."/>
        </authorList>
    </citation>
    <scope>NUCLEOTIDE SEQUENCE [MRNA]</scope>
    <scope>FUNCTION</scope>
    <scope>COFACTOR</scope>
    <scope>HOMODIMERIZATION</scope>
    <scope>INTERACTION WITH TOP6B</scope>
    <source>
        <strain>cv. Zhonghua 10</strain>
    </source>
</reference>
<reference key="2">
    <citation type="submission" date="2005-06" db="EMBL/GenBank/DDBJ databases">
        <title>Isolation and characterization of rice SPO11 genes.</title>
        <authorList>
            <person name="Yamada K."/>
            <person name="Kawagishi-Kobayashi M."/>
            <person name="Shingu Y."/>
            <person name="Mikawa T."/>
            <person name="Wakasa K."/>
            <person name="Shibata T."/>
        </authorList>
    </citation>
    <scope>NUCLEOTIDE SEQUENCE [MRNA]</scope>
    <source>
        <strain>cv. Nipponbare</strain>
    </source>
</reference>
<reference key="3">
    <citation type="journal article" date="2005" name="BMC Biol.">
        <title>The sequence of rice chromosomes 11 and 12, rich in disease resistance genes and recent gene duplications.</title>
        <authorList>
            <consortium name="The rice chromosomes 11 and 12 sequencing consortia"/>
        </authorList>
    </citation>
    <scope>NUCLEOTIDE SEQUENCE [LARGE SCALE GENOMIC DNA]</scope>
    <source>
        <strain>cv. Nipponbare</strain>
    </source>
</reference>
<reference key="4">
    <citation type="journal article" date="2005" name="Nature">
        <title>The map-based sequence of the rice genome.</title>
        <authorList>
            <consortium name="International rice genome sequencing project (IRGSP)"/>
        </authorList>
    </citation>
    <scope>NUCLEOTIDE SEQUENCE [LARGE SCALE GENOMIC DNA]</scope>
    <source>
        <strain>cv. Nipponbare</strain>
    </source>
</reference>
<reference key="5">
    <citation type="journal article" date="2008" name="Nucleic Acids Res.">
        <title>The rice annotation project database (RAP-DB): 2008 update.</title>
        <authorList>
            <consortium name="The rice annotation project (RAP)"/>
        </authorList>
    </citation>
    <scope>GENOME REANNOTATION</scope>
    <source>
        <strain>cv. Nipponbare</strain>
    </source>
</reference>
<reference key="6">
    <citation type="journal article" date="2013" name="Rice">
        <title>Improvement of the Oryza sativa Nipponbare reference genome using next generation sequence and optical map data.</title>
        <authorList>
            <person name="Kawahara Y."/>
            <person name="de la Bastide M."/>
            <person name="Hamilton J.P."/>
            <person name="Kanamori H."/>
            <person name="McCombie W.R."/>
            <person name="Ouyang S."/>
            <person name="Schwartz D.C."/>
            <person name="Tanaka T."/>
            <person name="Wu J."/>
            <person name="Zhou S."/>
            <person name="Childs K.L."/>
            <person name="Davidson R.M."/>
            <person name="Lin H."/>
            <person name="Quesada-Ocampo L."/>
            <person name="Vaillancourt B."/>
            <person name="Sakai H."/>
            <person name="Lee S.S."/>
            <person name="Kim J."/>
            <person name="Numa H."/>
            <person name="Itoh T."/>
            <person name="Buell C.R."/>
            <person name="Matsumoto T."/>
        </authorList>
    </citation>
    <scope>GENOME REANNOTATION</scope>
    <source>
        <strain>cv. Nipponbare</strain>
    </source>
</reference>
<reference key="7">
    <citation type="journal article" date="2005" name="PLoS Biol.">
        <title>The genomes of Oryza sativa: a history of duplications.</title>
        <authorList>
            <person name="Yu J."/>
            <person name="Wang J."/>
            <person name="Lin W."/>
            <person name="Li S."/>
            <person name="Li H."/>
            <person name="Zhou J."/>
            <person name="Ni P."/>
            <person name="Dong W."/>
            <person name="Hu S."/>
            <person name="Zeng C."/>
            <person name="Zhang J."/>
            <person name="Zhang Y."/>
            <person name="Li R."/>
            <person name="Xu Z."/>
            <person name="Li S."/>
            <person name="Li X."/>
            <person name="Zheng H."/>
            <person name="Cong L."/>
            <person name="Lin L."/>
            <person name="Yin J."/>
            <person name="Geng J."/>
            <person name="Li G."/>
            <person name="Shi J."/>
            <person name="Liu J."/>
            <person name="Lv H."/>
            <person name="Li J."/>
            <person name="Wang J."/>
            <person name="Deng Y."/>
            <person name="Ran L."/>
            <person name="Shi X."/>
            <person name="Wang X."/>
            <person name="Wu Q."/>
            <person name="Li C."/>
            <person name="Ren X."/>
            <person name="Wang J."/>
            <person name="Wang X."/>
            <person name="Li D."/>
            <person name="Liu D."/>
            <person name="Zhang X."/>
            <person name="Ji Z."/>
            <person name="Zhao W."/>
            <person name="Sun Y."/>
            <person name="Zhang Z."/>
            <person name="Bao J."/>
            <person name="Han Y."/>
            <person name="Dong L."/>
            <person name="Ji J."/>
            <person name="Chen P."/>
            <person name="Wu S."/>
            <person name="Liu J."/>
            <person name="Xiao Y."/>
            <person name="Bu D."/>
            <person name="Tan J."/>
            <person name="Yang L."/>
            <person name="Ye C."/>
            <person name="Zhang J."/>
            <person name="Xu J."/>
            <person name="Zhou Y."/>
            <person name="Yu Y."/>
            <person name="Zhang B."/>
            <person name="Zhuang S."/>
            <person name="Wei H."/>
            <person name="Liu B."/>
            <person name="Lei M."/>
            <person name="Yu H."/>
            <person name="Li Y."/>
            <person name="Xu H."/>
            <person name="Wei S."/>
            <person name="He X."/>
            <person name="Fang L."/>
            <person name="Zhang Z."/>
            <person name="Zhang Y."/>
            <person name="Huang X."/>
            <person name="Su Z."/>
            <person name="Tong W."/>
            <person name="Li J."/>
            <person name="Tong Z."/>
            <person name="Li S."/>
            <person name="Ye J."/>
            <person name="Wang L."/>
            <person name="Fang L."/>
            <person name="Lei T."/>
            <person name="Chen C.-S."/>
            <person name="Chen H.-C."/>
            <person name="Xu Z."/>
            <person name="Li H."/>
            <person name="Huang H."/>
            <person name="Zhang F."/>
            <person name="Xu H."/>
            <person name="Li N."/>
            <person name="Zhao C."/>
            <person name="Li S."/>
            <person name="Dong L."/>
            <person name="Huang Y."/>
            <person name="Li L."/>
            <person name="Xi Y."/>
            <person name="Qi Q."/>
            <person name="Li W."/>
            <person name="Zhang B."/>
            <person name="Hu W."/>
            <person name="Zhang Y."/>
            <person name="Tian X."/>
            <person name="Jiao Y."/>
            <person name="Liang X."/>
            <person name="Jin J."/>
            <person name="Gao L."/>
            <person name="Zheng W."/>
            <person name="Hao B."/>
            <person name="Liu S.-M."/>
            <person name="Wang W."/>
            <person name="Yuan L."/>
            <person name="Cao M."/>
            <person name="McDermott J."/>
            <person name="Samudrala R."/>
            <person name="Wang J."/>
            <person name="Wong G.K.-S."/>
            <person name="Yang H."/>
        </authorList>
    </citation>
    <scope>NUCLEOTIDE SEQUENCE [LARGE SCALE GENOMIC DNA]</scope>
    <source>
        <strain>cv. Nipponbare</strain>
    </source>
</reference>
<reference key="8">
    <citation type="journal article" date="2003" name="Science">
        <title>Collection, mapping, and annotation of over 28,000 cDNA clones from japonica rice.</title>
        <authorList>
            <consortium name="The rice full-length cDNA consortium"/>
        </authorList>
    </citation>
    <scope>NUCLEOTIDE SEQUENCE [LARGE SCALE MRNA]</scope>
    <source>
        <strain>cv. Nipponbare</strain>
    </source>
</reference>
<comment type="function">
    <text evidence="5">Required for meiotic recombination. Mediates DNA cleavage that forms the double-strand breaks (DSB) that initiate meiotic recombination. Possesses double-stranded DNA cleavage activity in vitro.</text>
</comment>
<comment type="catalytic activity">
    <reaction evidence="3">
        <text>ATP-dependent breakage, passage and rejoining of double-stranded DNA.</text>
        <dbReference type="EC" id="5.6.2.2"/>
    </reaction>
</comment>
<comment type="cofactor">
    <cofactor evidence="5">
        <name>Mg(2+)</name>
        <dbReference type="ChEBI" id="CHEBI:18420"/>
    </cofactor>
</comment>
<comment type="subunit">
    <text evidence="5">Homodimer. Interacts with TOP6B.</text>
</comment>
<comment type="subcellular location">
    <subcellularLocation>
        <location evidence="1">Nucleus</location>
    </subcellularLocation>
</comment>
<comment type="miscellaneous">
    <text evidence="7">Plants silencing TPO6A1 are sterile due to defect in male meiosis.</text>
</comment>
<comment type="similarity">
    <text evidence="6">Belongs to the TOP6A family.</text>
</comment>
<name>SPO14_ORYSJ</name>
<accession>Q2QM00</accession>
<accession>A0A0P0YD99</accession>
<accession>D2K3B6</accession>
<sequence>MDDSTDDDSYHPRKHYAYDRQVSSSRWRTSREYIRGPGPETHTTESAQDGQDPPAGVYSYGYFSGSGNDPQVQGHFVPEIQKYNPYVIFKGEQLPVPIWELPEEKVQDFHDRYFIAKDKSRVEARKTLNRLLEGNINTIERGHGYKFNIPKYTDNMEFNEEVKVSLAKAGKTISRSFCNANQREVASRTGYTIDLIERTLGAGLNISKRTVLYTNKDLFGDQSKSDQAINDICALTNIRRGSLGIIAAEKGIVVGNIFLELTNGKSISCSIGVQIPHRLDQIKDVCVEIGSRNIEYILVVEKHTMLNYLLEMDYHTNNNCIILTGCGMPTLQTRDFLRFLKQRTGLPVFGLCDPDPEGISILATYARGSCNSAYDNFNISVPSICWVGLSSSDMIKLNLSETNYSRLSREDKTMLKNLWQDDLSDVWKRRIEEMISFDKKASFEAIHSLGFDYFATNLLPDMINKVREGYVQVQEKKEPQDTEASED</sequence>
<protein>
    <recommendedName>
        <fullName>Meiotic recombination protein SPO11-4</fullName>
        <shortName>OsSPO11-4</shortName>
        <ecNumber evidence="3">5.6.2.2</ecNumber>
    </recommendedName>
    <alternativeName>
        <fullName>OsSPO11D</fullName>
    </alternativeName>
</protein>
<gene>
    <name type="primary">SPO11-4</name>
    <name type="ordered locus">Os12g0622500</name>
    <name type="ordered locus">LOC_Os12g42760</name>
    <name type="ORF">OsJ_36918</name>
</gene>
<dbReference type="EC" id="5.6.2.2" evidence="3"/>
<dbReference type="EMBL" id="GU177866">
    <property type="protein sequence ID" value="ACZ58078.2"/>
    <property type="molecule type" value="mRNA"/>
</dbReference>
<dbReference type="EMBL" id="AB219540">
    <property type="protein sequence ID" value="BAF65347.1"/>
    <property type="molecule type" value="mRNA"/>
</dbReference>
<dbReference type="EMBL" id="DP000011">
    <property type="protein sequence ID" value="ABA99412.2"/>
    <property type="molecule type" value="Genomic_DNA"/>
</dbReference>
<dbReference type="EMBL" id="AP008218">
    <property type="protein sequence ID" value="BAF30326.1"/>
    <property type="molecule type" value="Genomic_DNA"/>
</dbReference>
<dbReference type="EMBL" id="AP014968">
    <property type="protein sequence ID" value="BAT18151.1"/>
    <property type="molecule type" value="Genomic_DNA"/>
</dbReference>
<dbReference type="EMBL" id="CM000149">
    <property type="protein sequence ID" value="EAZ21266.1"/>
    <property type="molecule type" value="Genomic_DNA"/>
</dbReference>
<dbReference type="EMBL" id="AK101363">
    <property type="protein sequence ID" value="BAG95027.1"/>
    <property type="molecule type" value="mRNA"/>
</dbReference>
<dbReference type="RefSeq" id="XP_015618337.1">
    <property type="nucleotide sequence ID" value="XM_015762851.1"/>
</dbReference>
<dbReference type="SMR" id="Q2QM00"/>
<dbReference type="STRING" id="39947.Q2QM00"/>
<dbReference type="PaxDb" id="39947-Q2QM00"/>
<dbReference type="EnsemblPlants" id="Os12t0622500-01">
    <property type="protein sequence ID" value="Os12t0622500-01"/>
    <property type="gene ID" value="Os12g0622500"/>
</dbReference>
<dbReference type="Gramene" id="Os12t0622500-01">
    <property type="protein sequence ID" value="Os12t0622500-01"/>
    <property type="gene ID" value="Os12g0622500"/>
</dbReference>
<dbReference type="KEGG" id="dosa:Os12g0622500"/>
<dbReference type="eggNOG" id="KOG2795">
    <property type="taxonomic scope" value="Eukaryota"/>
</dbReference>
<dbReference type="HOGENOM" id="CLU_560677_0_0_1"/>
<dbReference type="InParanoid" id="Q2QM00"/>
<dbReference type="OMA" id="GAICENA"/>
<dbReference type="OrthoDB" id="5377392at2759"/>
<dbReference type="Proteomes" id="UP000000763">
    <property type="component" value="Chromosome 12"/>
</dbReference>
<dbReference type="Proteomes" id="UP000007752">
    <property type="component" value="Chromosome 12"/>
</dbReference>
<dbReference type="Proteomes" id="UP000059680">
    <property type="component" value="Chromosome 12"/>
</dbReference>
<dbReference type="GO" id="GO:0000228">
    <property type="term" value="C:nuclear chromosome"/>
    <property type="evidence" value="ECO:0000318"/>
    <property type="project" value="GO_Central"/>
</dbReference>
<dbReference type="GO" id="GO:0005524">
    <property type="term" value="F:ATP binding"/>
    <property type="evidence" value="ECO:0007669"/>
    <property type="project" value="InterPro"/>
</dbReference>
<dbReference type="GO" id="GO:0003677">
    <property type="term" value="F:DNA binding"/>
    <property type="evidence" value="ECO:0000318"/>
    <property type="project" value="GO_Central"/>
</dbReference>
<dbReference type="GO" id="GO:0003918">
    <property type="term" value="F:DNA topoisomerase type II (double strand cut, ATP-hydrolyzing) activity"/>
    <property type="evidence" value="ECO:0007669"/>
    <property type="project" value="InterPro"/>
</dbReference>
<dbReference type="GO" id="GO:0016787">
    <property type="term" value="F:hydrolase activity"/>
    <property type="evidence" value="ECO:0007669"/>
    <property type="project" value="UniProtKB-KW"/>
</dbReference>
<dbReference type="GO" id="GO:0046872">
    <property type="term" value="F:metal ion binding"/>
    <property type="evidence" value="ECO:0007669"/>
    <property type="project" value="UniProtKB-KW"/>
</dbReference>
<dbReference type="GO" id="GO:0042803">
    <property type="term" value="F:protein homodimerization activity"/>
    <property type="evidence" value="ECO:0000353"/>
    <property type="project" value="UniProtKB"/>
</dbReference>
<dbReference type="GO" id="GO:0030957">
    <property type="term" value="F:Tat protein binding"/>
    <property type="evidence" value="ECO:0000353"/>
    <property type="project" value="UniProtKB"/>
</dbReference>
<dbReference type="GO" id="GO:0006265">
    <property type="term" value="P:DNA topological change"/>
    <property type="evidence" value="ECO:0007669"/>
    <property type="project" value="InterPro"/>
</dbReference>
<dbReference type="GO" id="GO:0006302">
    <property type="term" value="P:double-strand break repair"/>
    <property type="evidence" value="ECO:0000315"/>
    <property type="project" value="UniProtKB"/>
</dbReference>
<dbReference type="GO" id="GO:0042138">
    <property type="term" value="P:meiotic DNA double-strand break formation"/>
    <property type="evidence" value="ECO:0000318"/>
    <property type="project" value="GO_Central"/>
</dbReference>
<dbReference type="GO" id="GO:0000706">
    <property type="term" value="P:meiotic DNA double-strand break processing"/>
    <property type="evidence" value="ECO:0000318"/>
    <property type="project" value="GO_Central"/>
</dbReference>
<dbReference type="GO" id="GO:0007131">
    <property type="term" value="P:reciprocal meiotic recombination"/>
    <property type="evidence" value="ECO:0000315"/>
    <property type="project" value="UniProtKB"/>
</dbReference>
<dbReference type="CDD" id="cd00223">
    <property type="entry name" value="TOPRIM_TopoIIB_SPO"/>
    <property type="match status" value="1"/>
</dbReference>
<dbReference type="Gene3D" id="3.40.1360.10">
    <property type="match status" value="1"/>
</dbReference>
<dbReference type="Gene3D" id="1.10.10.10">
    <property type="entry name" value="Winged helix-like DNA-binding domain superfamily/Winged helix DNA-binding domain"/>
    <property type="match status" value="1"/>
</dbReference>
<dbReference type="InterPro" id="IPR002815">
    <property type="entry name" value="Spo11/TopoVI_A"/>
</dbReference>
<dbReference type="InterPro" id="IPR013049">
    <property type="entry name" value="Spo11/TopoVI_A_N"/>
</dbReference>
<dbReference type="InterPro" id="IPR036078">
    <property type="entry name" value="Spo11/TopoVI_A_sf"/>
</dbReference>
<dbReference type="InterPro" id="IPR004085">
    <property type="entry name" value="TopoVI_A"/>
</dbReference>
<dbReference type="InterPro" id="IPR034136">
    <property type="entry name" value="TOPRIM_Topo6A/Spo11"/>
</dbReference>
<dbReference type="InterPro" id="IPR036388">
    <property type="entry name" value="WH-like_DNA-bd_sf"/>
</dbReference>
<dbReference type="PANTHER" id="PTHR10848">
    <property type="entry name" value="MEIOTIC RECOMBINATION PROTEIN SPO11"/>
    <property type="match status" value="1"/>
</dbReference>
<dbReference type="PANTHER" id="PTHR10848:SF3">
    <property type="entry name" value="MEIOTIC RECOMBINATION PROTEIN SPO11-1"/>
    <property type="match status" value="1"/>
</dbReference>
<dbReference type="Pfam" id="PF21180">
    <property type="entry name" value="TOP6A-Spo11_Toprim"/>
    <property type="match status" value="1"/>
</dbReference>
<dbReference type="Pfam" id="PF04406">
    <property type="entry name" value="TP6A_N"/>
    <property type="match status" value="1"/>
</dbReference>
<dbReference type="PRINTS" id="PR01550">
    <property type="entry name" value="TOP6AFAMILY"/>
</dbReference>
<dbReference type="PRINTS" id="PR01552">
    <property type="entry name" value="TPISMRASE6A"/>
</dbReference>
<dbReference type="SUPFAM" id="SSF56726">
    <property type="entry name" value="DNA topoisomerase IV, alpha subunit"/>
    <property type="match status" value="1"/>
</dbReference>
<dbReference type="PROSITE" id="PS52041">
    <property type="entry name" value="TOPO_IIB"/>
    <property type="match status" value="1"/>
</dbReference>
<keyword id="KW-0238">DNA-binding</keyword>
<keyword id="KW-0378">Hydrolase</keyword>
<keyword id="KW-0413">Isomerase</keyword>
<keyword id="KW-0460">Magnesium</keyword>
<keyword id="KW-0479">Metal-binding</keyword>
<keyword id="KW-0539">Nucleus</keyword>
<keyword id="KW-1185">Reference proteome</keyword>
<keyword id="KW-0799">Topoisomerase</keyword>
<evidence type="ECO:0000250" key="1"/>
<evidence type="ECO:0000250" key="2">
    <source>
        <dbReference type="UniProtKB" id="Q57815"/>
    </source>
</evidence>
<evidence type="ECO:0000255" key="3">
    <source>
        <dbReference type="PROSITE-ProRule" id="PRU01385"/>
    </source>
</evidence>
<evidence type="ECO:0000256" key="4">
    <source>
        <dbReference type="SAM" id="MobiDB-lite"/>
    </source>
</evidence>
<evidence type="ECO:0000269" key="5">
    <source>
    </source>
</evidence>
<evidence type="ECO:0000305" key="6"/>
<evidence type="ECO:0000305" key="7">
    <source>
    </source>
</evidence>
<proteinExistence type="evidence at protein level"/>
<organism>
    <name type="scientific">Oryza sativa subsp. japonica</name>
    <name type="common">Rice</name>
    <dbReference type="NCBI Taxonomy" id="39947"/>
    <lineage>
        <taxon>Eukaryota</taxon>
        <taxon>Viridiplantae</taxon>
        <taxon>Streptophyta</taxon>
        <taxon>Embryophyta</taxon>
        <taxon>Tracheophyta</taxon>
        <taxon>Spermatophyta</taxon>
        <taxon>Magnoliopsida</taxon>
        <taxon>Liliopsida</taxon>
        <taxon>Poales</taxon>
        <taxon>Poaceae</taxon>
        <taxon>BOP clade</taxon>
        <taxon>Oryzoideae</taxon>
        <taxon>Oryzeae</taxon>
        <taxon>Oryzinae</taxon>
        <taxon>Oryza</taxon>
        <taxon>Oryza sativa</taxon>
    </lineage>
</organism>